<name>TRPB_SHOC1</name>
<feature type="chain" id="PRO_1000018326" description="Tryptophan synthase beta chain">
    <location>
        <begin position="1"/>
        <end position="399"/>
    </location>
</feature>
<feature type="modified residue" description="N6-(pyridoxal phosphate)lysine" evidence="1">
    <location>
        <position position="91"/>
    </location>
</feature>
<comment type="function">
    <text evidence="1">The beta subunit is responsible for the synthesis of L-tryptophan from indole and L-serine.</text>
</comment>
<comment type="catalytic activity">
    <reaction evidence="1">
        <text>(1S,2R)-1-C-(indol-3-yl)glycerol 3-phosphate + L-serine = D-glyceraldehyde 3-phosphate + L-tryptophan + H2O</text>
        <dbReference type="Rhea" id="RHEA:10532"/>
        <dbReference type="ChEBI" id="CHEBI:15377"/>
        <dbReference type="ChEBI" id="CHEBI:33384"/>
        <dbReference type="ChEBI" id="CHEBI:57912"/>
        <dbReference type="ChEBI" id="CHEBI:58866"/>
        <dbReference type="ChEBI" id="CHEBI:59776"/>
        <dbReference type="EC" id="4.2.1.20"/>
    </reaction>
</comment>
<comment type="cofactor">
    <cofactor evidence="1">
        <name>pyridoxal 5'-phosphate</name>
        <dbReference type="ChEBI" id="CHEBI:597326"/>
    </cofactor>
</comment>
<comment type="pathway">
    <text evidence="1">Amino-acid biosynthesis; L-tryptophan biosynthesis; L-tryptophan from chorismate: step 5/5.</text>
</comment>
<comment type="subunit">
    <text evidence="1">Tetramer of two alpha and two beta chains.</text>
</comment>
<comment type="similarity">
    <text evidence="1">Belongs to the TrpB family.</text>
</comment>
<keyword id="KW-0028">Amino-acid biosynthesis</keyword>
<keyword id="KW-0057">Aromatic amino acid biosynthesis</keyword>
<keyword id="KW-0456">Lyase</keyword>
<keyword id="KW-0663">Pyridoxal phosphate</keyword>
<keyword id="KW-1185">Reference proteome</keyword>
<keyword id="KW-0822">Tryptophan biosynthesis</keyword>
<reference key="1">
    <citation type="submission" date="2003-10" db="EMBL/GenBank/DDBJ databases">
        <title>The complete genome sequence of the alkaliphilic Bacillus clausii KSM-K16.</title>
        <authorList>
            <person name="Takaki Y."/>
            <person name="Kageyama Y."/>
            <person name="Shimamura S."/>
            <person name="Suzuki H."/>
            <person name="Nishi S."/>
            <person name="Hatada Y."/>
            <person name="Kawai S."/>
            <person name="Ito S."/>
            <person name="Horikoshi K."/>
        </authorList>
    </citation>
    <scope>NUCLEOTIDE SEQUENCE [LARGE SCALE GENOMIC DNA]</scope>
    <source>
        <strain>KSM-K16</strain>
    </source>
</reference>
<gene>
    <name evidence="1" type="primary">trpB</name>
    <name type="ordered locus">ABC1899</name>
</gene>
<dbReference type="EC" id="4.2.1.20" evidence="1"/>
<dbReference type="EMBL" id="AP006627">
    <property type="protein sequence ID" value="BAD64434.1"/>
    <property type="molecule type" value="Genomic_DNA"/>
</dbReference>
<dbReference type="RefSeq" id="WP_011246742.1">
    <property type="nucleotide sequence ID" value="NC_006582.1"/>
</dbReference>
<dbReference type="SMR" id="Q5WGS1"/>
<dbReference type="STRING" id="66692.ABC1899"/>
<dbReference type="KEGG" id="bcl:ABC1899"/>
<dbReference type="eggNOG" id="COG0133">
    <property type="taxonomic scope" value="Bacteria"/>
</dbReference>
<dbReference type="HOGENOM" id="CLU_016734_3_1_9"/>
<dbReference type="OrthoDB" id="9766131at2"/>
<dbReference type="UniPathway" id="UPA00035">
    <property type="reaction ID" value="UER00044"/>
</dbReference>
<dbReference type="Proteomes" id="UP000001168">
    <property type="component" value="Chromosome"/>
</dbReference>
<dbReference type="GO" id="GO:0005737">
    <property type="term" value="C:cytoplasm"/>
    <property type="evidence" value="ECO:0007669"/>
    <property type="project" value="TreeGrafter"/>
</dbReference>
<dbReference type="GO" id="GO:0004834">
    <property type="term" value="F:tryptophan synthase activity"/>
    <property type="evidence" value="ECO:0007669"/>
    <property type="project" value="UniProtKB-UniRule"/>
</dbReference>
<dbReference type="CDD" id="cd06446">
    <property type="entry name" value="Trp-synth_B"/>
    <property type="match status" value="1"/>
</dbReference>
<dbReference type="FunFam" id="3.40.50.1100:FF:000001">
    <property type="entry name" value="Tryptophan synthase beta chain"/>
    <property type="match status" value="1"/>
</dbReference>
<dbReference type="FunFam" id="3.40.50.1100:FF:000004">
    <property type="entry name" value="Tryptophan synthase beta chain"/>
    <property type="match status" value="1"/>
</dbReference>
<dbReference type="Gene3D" id="3.40.50.1100">
    <property type="match status" value="2"/>
</dbReference>
<dbReference type="HAMAP" id="MF_00133">
    <property type="entry name" value="Trp_synth_beta"/>
    <property type="match status" value="1"/>
</dbReference>
<dbReference type="InterPro" id="IPR006653">
    <property type="entry name" value="Trp_synth_b_CS"/>
</dbReference>
<dbReference type="InterPro" id="IPR006654">
    <property type="entry name" value="Trp_synth_beta"/>
</dbReference>
<dbReference type="InterPro" id="IPR023026">
    <property type="entry name" value="Trp_synth_beta/beta-like"/>
</dbReference>
<dbReference type="InterPro" id="IPR001926">
    <property type="entry name" value="TrpB-like_PALP"/>
</dbReference>
<dbReference type="InterPro" id="IPR036052">
    <property type="entry name" value="TrpB-like_PALP_sf"/>
</dbReference>
<dbReference type="NCBIfam" id="TIGR00263">
    <property type="entry name" value="trpB"/>
    <property type="match status" value="1"/>
</dbReference>
<dbReference type="PANTHER" id="PTHR48077:SF3">
    <property type="entry name" value="TRYPTOPHAN SYNTHASE"/>
    <property type="match status" value="1"/>
</dbReference>
<dbReference type="PANTHER" id="PTHR48077">
    <property type="entry name" value="TRYPTOPHAN SYNTHASE-RELATED"/>
    <property type="match status" value="1"/>
</dbReference>
<dbReference type="Pfam" id="PF00291">
    <property type="entry name" value="PALP"/>
    <property type="match status" value="1"/>
</dbReference>
<dbReference type="PIRSF" id="PIRSF001413">
    <property type="entry name" value="Trp_syn_beta"/>
    <property type="match status" value="1"/>
</dbReference>
<dbReference type="SUPFAM" id="SSF53686">
    <property type="entry name" value="Tryptophan synthase beta subunit-like PLP-dependent enzymes"/>
    <property type="match status" value="1"/>
</dbReference>
<dbReference type="PROSITE" id="PS00168">
    <property type="entry name" value="TRP_SYNTHASE_BETA"/>
    <property type="match status" value="1"/>
</dbReference>
<organism>
    <name type="scientific">Shouchella clausii (strain KSM-K16)</name>
    <name type="common">Alkalihalobacillus clausii</name>
    <dbReference type="NCBI Taxonomy" id="66692"/>
    <lineage>
        <taxon>Bacteria</taxon>
        <taxon>Bacillati</taxon>
        <taxon>Bacillota</taxon>
        <taxon>Bacilli</taxon>
        <taxon>Bacillales</taxon>
        <taxon>Bacillaceae</taxon>
        <taxon>Shouchella</taxon>
    </lineage>
</organism>
<sequence length="399" mass="43036">MQETIPDSRGRFGEFGGKYVPETLMSAIEELEAGLAKAMVDPAFIGELKADLAEYAGRETPLTFAKNISAKLGGANIYLKREDLVHTGAHKLNNAIGQGLLAKRMGKNKLVAETGAGQHGVATATVASRLGMECKVFMGVEDMKRQELNVFRMELLGAEVVPAETGSRTLKDATNEAIRYWVSHADDTFYLIGSVVGPHPYPKMVRNFQRVIGDEAKQQMAEKTGRLPDTIVACVGGGSNAIGMFYPFLDDEVELVGVEAAGRGLDTAEHAATISKGSKGIIHGSLTYLLQDESGQIKEPYSISAGLDYPGVGPEHAYLAAQKRVRYEAVTDKEALDALALLAKEEGIIPAIESAHALAKAFQMAKTMTPNQSVLVCLSGRGDKDMHTLQRVYKEGYDE</sequence>
<proteinExistence type="inferred from homology"/>
<evidence type="ECO:0000255" key="1">
    <source>
        <dbReference type="HAMAP-Rule" id="MF_00133"/>
    </source>
</evidence>
<accession>Q5WGS1</accession>
<protein>
    <recommendedName>
        <fullName evidence="1">Tryptophan synthase beta chain</fullName>
        <ecNumber evidence="1">4.2.1.20</ecNumber>
    </recommendedName>
</protein>